<gene>
    <name type="primary">FBXO21</name>
</gene>
<comment type="function">
    <text evidence="1">Substrate-recognition component of the SCF (SKP1-CUL1-F-box protein)-type E3 ubiquitin ligase complex.</text>
</comment>
<comment type="subunit">
    <text evidence="1">Interacts with SKP1 and CUL1.</text>
</comment>
<evidence type="ECO:0000250" key="1"/>
<keyword id="KW-1185">Reference proteome</keyword>
<keyword id="KW-0833">Ubl conjugation pathway</keyword>
<sequence>MAAAAVDSAMEVVPALAEEAAPEVAGLSCLVNLPGEVLEYILCCGSLTAADIGRVSSTCRRLRELCQSSGKVWKEQFRVRWPSLMKHYSPTDYVNWLEEYKVRQKAGLEARKIVASFSKRFFSEHVPCNGFSDIENLEGPEIFFEDELVCILNMEGRKALTWKYYAKKILYYLRQQKILNNLKAFLQQPDDYESYLEGAVYIDQYCNPLSDISLKDIQAQIDSIVELVCKTLRGINSRHPSLAFKAGESSMIVEIELQSQVLDAMNYVLYDQLKFQGNRMDYYNALNLYMHQVLIRRTGIPISMSLLYLTIARQLGVPLEPVNFPSHFLLRWCQGAEGATLDIFDYIYIDAFGKGKQLTVKECEYLIGQHVTAALYGVVNVKKVLQRMVGNLLSLGKREGIDQSYQLLRDSLDLYLAMYPDQVQLLLLQARLYFHLGIWPEKVLDILQHIQTLDPGQHGAVGYLVQHTLEHIERKKEEVGVEVKLRSDEKHRDVCYSIGLIMKHKRYGYNCVIYGWDPTCMMGHEWIRNMNVHSLPHGHHQPFYNVLVEDGSCRYAAQENLEYNVEPQEISHPDVGRYFSEFTGTHYIPNAELEIRYPEDLEFVYETVQNIYSAKKENIDE</sequence>
<protein>
    <recommendedName>
        <fullName>F-box only protein 21</fullName>
    </recommendedName>
</protein>
<name>FBX21_PONAB</name>
<feature type="chain" id="PRO_0000119905" description="F-box only protein 21">
    <location>
        <begin position="1"/>
        <end position="621"/>
    </location>
</feature>
<feature type="domain" description="F-box">
    <location>
        <begin position="28"/>
        <end position="77"/>
    </location>
</feature>
<proteinExistence type="evidence at transcript level"/>
<organism>
    <name type="scientific">Pongo abelii</name>
    <name type="common">Sumatran orangutan</name>
    <name type="synonym">Pongo pygmaeus abelii</name>
    <dbReference type="NCBI Taxonomy" id="9601"/>
    <lineage>
        <taxon>Eukaryota</taxon>
        <taxon>Metazoa</taxon>
        <taxon>Chordata</taxon>
        <taxon>Craniata</taxon>
        <taxon>Vertebrata</taxon>
        <taxon>Euteleostomi</taxon>
        <taxon>Mammalia</taxon>
        <taxon>Eutheria</taxon>
        <taxon>Euarchontoglires</taxon>
        <taxon>Primates</taxon>
        <taxon>Haplorrhini</taxon>
        <taxon>Catarrhini</taxon>
        <taxon>Hominidae</taxon>
        <taxon>Pongo</taxon>
    </lineage>
</organism>
<dbReference type="EMBL" id="CR860785">
    <property type="protein sequence ID" value="CAH92895.1"/>
    <property type="molecule type" value="mRNA"/>
</dbReference>
<dbReference type="SMR" id="Q5R5S1"/>
<dbReference type="FunCoup" id="Q5R5S1">
    <property type="interactions" value="352"/>
</dbReference>
<dbReference type="STRING" id="9601.ENSPPYP00000005705"/>
<dbReference type="eggNOG" id="ENOG502QS7Z">
    <property type="taxonomic scope" value="Eukaryota"/>
</dbReference>
<dbReference type="InParanoid" id="Q5R5S1"/>
<dbReference type="Proteomes" id="UP000001595">
    <property type="component" value="Unplaced"/>
</dbReference>
<dbReference type="GO" id="GO:0003677">
    <property type="term" value="F:DNA binding"/>
    <property type="evidence" value="ECO:0007669"/>
    <property type="project" value="InterPro"/>
</dbReference>
<dbReference type="CDD" id="cd22096">
    <property type="entry name" value="F-box_FBXO21"/>
    <property type="match status" value="1"/>
</dbReference>
<dbReference type="Gene3D" id="1.20.1280.50">
    <property type="match status" value="1"/>
</dbReference>
<dbReference type="Gene3D" id="2.30.30.390">
    <property type="entry name" value="Hemimethylated DNA-binding domain"/>
    <property type="match status" value="1"/>
</dbReference>
<dbReference type="InterPro" id="IPR036047">
    <property type="entry name" value="F-box-like_dom_sf"/>
</dbReference>
<dbReference type="InterPro" id="IPR001810">
    <property type="entry name" value="F-box_dom"/>
</dbReference>
<dbReference type="InterPro" id="IPR011722">
    <property type="entry name" value="Hemimethylated_DNA-bd_dom"/>
</dbReference>
<dbReference type="InterPro" id="IPR036623">
    <property type="entry name" value="Hemimethylated_DNA-bd_sf"/>
</dbReference>
<dbReference type="InterPro" id="IPR032698">
    <property type="entry name" value="SirB1_N"/>
</dbReference>
<dbReference type="NCBIfam" id="TIGR02097">
    <property type="entry name" value="yccV"/>
    <property type="match status" value="1"/>
</dbReference>
<dbReference type="PANTHER" id="PTHR31350:SF21">
    <property type="entry name" value="F-BOX ONLY PROTEIN 21"/>
    <property type="match status" value="1"/>
</dbReference>
<dbReference type="PANTHER" id="PTHR31350">
    <property type="entry name" value="SI:DKEY-261L7.2"/>
    <property type="match status" value="1"/>
</dbReference>
<dbReference type="Pfam" id="PF12937">
    <property type="entry name" value="F-box-like"/>
    <property type="match status" value="1"/>
</dbReference>
<dbReference type="Pfam" id="PF13369">
    <property type="entry name" value="Transglut_core2"/>
    <property type="match status" value="1"/>
</dbReference>
<dbReference type="Pfam" id="PF08755">
    <property type="entry name" value="YccV-like"/>
    <property type="match status" value="1"/>
</dbReference>
<dbReference type="SMART" id="SM00992">
    <property type="entry name" value="YccV-like"/>
    <property type="match status" value="1"/>
</dbReference>
<dbReference type="SUPFAM" id="SSF81383">
    <property type="entry name" value="F-box domain"/>
    <property type="match status" value="1"/>
</dbReference>
<dbReference type="SUPFAM" id="SSF141255">
    <property type="entry name" value="YccV-like"/>
    <property type="match status" value="1"/>
</dbReference>
<accession>Q5R5S1</accession>
<reference key="1">
    <citation type="submission" date="2004-11" db="EMBL/GenBank/DDBJ databases">
        <authorList>
            <consortium name="The German cDNA consortium"/>
        </authorList>
    </citation>
    <scope>NUCLEOTIDE SEQUENCE [LARGE SCALE MRNA]</scope>
    <source>
        <tissue>Brain cortex</tissue>
    </source>
</reference>